<name>NCED5_ORYSJ</name>
<proteinExistence type="evidence at transcript level"/>
<protein>
    <recommendedName>
        <fullName evidence="8">9-cis-epoxycarotenoid dioxygenase NCED5, chloroplastic</fullName>
        <shortName evidence="9">OsNCED5</shortName>
        <ecNumber evidence="1">1.13.11.51</ecNumber>
    </recommendedName>
</protein>
<gene>
    <name evidence="9" type="primary">NCED5</name>
    <name evidence="11" type="ordered locus">Os12g0617400</name>
    <name evidence="10" type="ordered locus">LOC_Os12g42280</name>
</gene>
<sequence length="613" mass="65929">MPTTFTPNSPASSCSIHHRASPSRGARNSVRFTRPRAAAAATNSVLSAPSSVPPAYVPPPPPPPTKMFPEAGDAAAAKAAARRCGKKKDGLNFFQRAAAVALDAFEEGFITNVLERPHALPRTADPAVQIAGNFAPVGEQPPVRSLPVSGRIPPFINGVYARNGANPHFEPTAGHHLFDGDGMVHAVRIRNGAAESYACRFTETARLGQERALGRAVFPKAIGELHGHSGIARLALFYARGLCGLVDPSHGTGVANAGLVYFNGRLLAMSEDDLPYQVRVTADGDLETVGRYDFDGQLGCAMIAHPKLDPVSGELFALSYDVIKKPYLKYFYFDADGTKSPDVEIELEQPTMIHDFAITENFVVVPDHQVVFKLGEMFRGGSPVVLDREKTSRFGVLPKHATSSLEMVWVDVPDCFCFHLWNAWEEAESGEVVVVGSCMTPADSIFNESDEHLESVLTEIRLNTRTGESTRRAVLPPAAQVNLEVGMVNRAMLGRKTRYAYLAVAEPWPKVSGFAKVDLATGELTKFEYGEGRFGGEPCFVPMGGAGAAASPARGEDDGYILSFVRDEAAGTSELLVVNAADMRLEATVQLPSRVPYGFHGTFINAGELATQA</sequence>
<comment type="function">
    <text evidence="1">Has a 11,12(11',12') 9-cis epoxycarotenoid cleavage activity. Catalyzes the first step of abscisic-acid biosynthesis from carotenoids.</text>
</comment>
<comment type="catalytic activity">
    <reaction evidence="1">
        <text>a 9-cis-epoxycarotenoid + O2 = a 12'-apo-carotenal + 2-cis,4-trans-xanthoxin</text>
        <dbReference type="Rhea" id="RHEA:23328"/>
        <dbReference type="ChEBI" id="CHEBI:15379"/>
        <dbReference type="ChEBI" id="CHEBI:32304"/>
        <dbReference type="ChEBI" id="CHEBI:51972"/>
        <dbReference type="ChEBI" id="CHEBI:51973"/>
        <dbReference type="EC" id="1.13.11.51"/>
    </reaction>
</comment>
<comment type="catalytic activity">
    <reaction evidence="1">
        <text>9-cis-violaxanthin + O2 = (3S,5R,6S)-5,6-epoxy-3-hydroxy-5,6-dihydro-12'-apo-beta-caroten-12'-al + 2-cis,4-trans-xanthoxin</text>
        <dbReference type="Rhea" id="RHEA:16541"/>
        <dbReference type="ChEBI" id="CHEBI:15379"/>
        <dbReference type="ChEBI" id="CHEBI:32304"/>
        <dbReference type="ChEBI" id="CHEBI:34597"/>
        <dbReference type="ChEBI" id="CHEBI:35305"/>
        <dbReference type="EC" id="1.13.11.51"/>
    </reaction>
</comment>
<comment type="catalytic activity">
    <reaction evidence="1">
        <text>9'-cis-neoxanthin + O2 = (3S,5R,6R)-3,5-dihydroxy-6,7-didehydro-5,6-dihydro-12'-apo-beta-caroten-12'-al + 2-cis,4-trans-xanthoxin</text>
        <dbReference type="Rhea" id="RHEA:19677"/>
        <dbReference type="ChEBI" id="CHEBI:15379"/>
        <dbReference type="ChEBI" id="CHEBI:32304"/>
        <dbReference type="ChEBI" id="CHEBI:34596"/>
        <dbReference type="ChEBI" id="CHEBI:35306"/>
        <dbReference type="EC" id="1.13.11.51"/>
    </reaction>
</comment>
<comment type="cofactor">
    <cofactor evidence="1">
        <name>Fe(2+)</name>
        <dbReference type="ChEBI" id="CHEBI:29033"/>
    </cofactor>
    <text evidence="1">Binds 1 Fe(2+) ion per subunit.</text>
</comment>
<comment type="subcellular location">
    <subcellularLocation>
        <location evidence="2">Plastid</location>
        <location evidence="2">Chloroplast</location>
    </subcellularLocation>
</comment>
<comment type="induction">
    <text evidence="4 5 6 7">Induced by abscisic acid (ABA) and salt (PubMed:18326788). Induced by D-allose (PubMed:23397192). Induced by drought stress (PubMed:25418692, PubMed:25735958).</text>
</comment>
<comment type="similarity">
    <text evidence="8">Belongs to the carotenoid oxygenase family.</text>
</comment>
<comment type="sequence caution" evidence="8">
    <conflict type="erroneous gene model prediction">
        <sequence resource="EMBL-CDS" id="BAT18107"/>
    </conflict>
</comment>
<accession>Q5MBR3</accession>
<accession>A0A0P0YC36</accession>
<feature type="transit peptide" description="Chloroplast" evidence="2">
    <location>
        <begin position="1"/>
        <end position="36"/>
    </location>
</feature>
<feature type="chain" id="PRO_0000440941" description="9-cis-epoxycarotenoid dioxygenase NCED5, chloroplastic" evidence="2">
    <location>
        <begin position="37"/>
        <end position="613"/>
    </location>
</feature>
<feature type="region of interest" description="Disordered" evidence="3">
    <location>
        <begin position="1"/>
        <end position="62"/>
    </location>
</feature>
<feature type="compositionally biased region" description="Polar residues" evidence="3">
    <location>
        <begin position="1"/>
        <end position="15"/>
    </location>
</feature>
<feature type="compositionally biased region" description="Low complexity" evidence="3">
    <location>
        <begin position="37"/>
        <end position="50"/>
    </location>
</feature>
<feature type="compositionally biased region" description="Pro residues" evidence="3">
    <location>
        <begin position="51"/>
        <end position="62"/>
    </location>
</feature>
<feature type="binding site" evidence="1">
    <location>
        <position position="305"/>
    </location>
    <ligand>
        <name>Fe cation</name>
        <dbReference type="ChEBI" id="CHEBI:24875"/>
    </ligand>
</feature>
<feature type="binding site" evidence="1">
    <location>
        <position position="354"/>
    </location>
    <ligand>
        <name>Fe cation</name>
        <dbReference type="ChEBI" id="CHEBI:24875"/>
    </ligand>
</feature>
<feature type="binding site" evidence="1">
    <location>
        <position position="419"/>
    </location>
    <ligand>
        <name>Fe cation</name>
        <dbReference type="ChEBI" id="CHEBI:24875"/>
    </ligand>
</feature>
<feature type="binding site" evidence="1">
    <location>
        <position position="600"/>
    </location>
    <ligand>
        <name>Fe cation</name>
        <dbReference type="ChEBI" id="CHEBI:24875"/>
    </ligand>
</feature>
<dbReference type="EC" id="1.13.11.51" evidence="1"/>
<dbReference type="EMBL" id="AY838901">
    <property type="protein sequence ID" value="AAW21321.1"/>
    <property type="molecule type" value="mRNA"/>
</dbReference>
<dbReference type="EMBL" id="DP000011">
    <property type="protein sequence ID" value="ABA99870.1"/>
    <property type="molecule type" value="Genomic_DNA"/>
</dbReference>
<dbReference type="EMBL" id="AP008218">
    <property type="protein sequence ID" value="BAH95791.1"/>
    <property type="molecule type" value="Genomic_DNA"/>
</dbReference>
<dbReference type="EMBL" id="AP014968">
    <property type="protein sequence ID" value="BAT18107.1"/>
    <property type="status" value="ALT_SEQ"/>
    <property type="molecule type" value="Genomic_DNA"/>
</dbReference>
<dbReference type="SMR" id="Q5MBR3"/>
<dbReference type="FunCoup" id="Q5MBR3">
    <property type="interactions" value="27"/>
</dbReference>
<dbReference type="STRING" id="39947.Q5MBR3"/>
<dbReference type="PaxDb" id="39947-Q5MBR3"/>
<dbReference type="EnsemblPlants" id="Os12t0617400-01">
    <property type="protein sequence ID" value="Os12t0617400-01"/>
    <property type="gene ID" value="Os12g0617400"/>
</dbReference>
<dbReference type="GeneID" id="9270250"/>
<dbReference type="Gramene" id="Os12t0617400-01">
    <property type="protein sequence ID" value="Os12t0617400-01"/>
    <property type="gene ID" value="Os12g0617400"/>
</dbReference>
<dbReference type="KEGG" id="dosa:Os12g0617400"/>
<dbReference type="KEGG" id="osa:9270250"/>
<dbReference type="eggNOG" id="KOG1285">
    <property type="taxonomic scope" value="Eukaryota"/>
</dbReference>
<dbReference type="InParanoid" id="Q5MBR3"/>
<dbReference type="OrthoDB" id="1069523at2759"/>
<dbReference type="PlantReactome" id="R-OSA-1119374">
    <property type="pathway name" value="Abscisic acid biosynthesis"/>
</dbReference>
<dbReference type="Proteomes" id="UP000000763">
    <property type="component" value="Chromosome 12"/>
</dbReference>
<dbReference type="Proteomes" id="UP000059680">
    <property type="component" value="Chromosome 12"/>
</dbReference>
<dbReference type="GO" id="GO:0009570">
    <property type="term" value="C:chloroplast stroma"/>
    <property type="evidence" value="ECO:0000318"/>
    <property type="project" value="GO_Central"/>
</dbReference>
<dbReference type="GO" id="GO:0045549">
    <property type="term" value="F:9-cis-epoxycarotenoid dioxygenase activity"/>
    <property type="evidence" value="ECO:0007669"/>
    <property type="project" value="UniProtKB-EC"/>
</dbReference>
<dbReference type="GO" id="GO:0010436">
    <property type="term" value="F:carotenoid dioxygenase activity"/>
    <property type="evidence" value="ECO:0000318"/>
    <property type="project" value="GO_Central"/>
</dbReference>
<dbReference type="GO" id="GO:0046872">
    <property type="term" value="F:metal ion binding"/>
    <property type="evidence" value="ECO:0007669"/>
    <property type="project" value="UniProtKB-KW"/>
</dbReference>
<dbReference type="GO" id="GO:0009688">
    <property type="term" value="P:abscisic acid biosynthetic process"/>
    <property type="evidence" value="ECO:0007669"/>
    <property type="project" value="UniProtKB-KW"/>
</dbReference>
<dbReference type="GO" id="GO:0016121">
    <property type="term" value="P:carotene catabolic process"/>
    <property type="evidence" value="ECO:0000318"/>
    <property type="project" value="GO_Central"/>
</dbReference>
<dbReference type="InterPro" id="IPR004294">
    <property type="entry name" value="Carotenoid_Oase"/>
</dbReference>
<dbReference type="PANTHER" id="PTHR10543:SF26">
    <property type="entry name" value="9-CIS-EPOXYCAROTENOID DIOXYGENASE NCED3, CHLOROPLASTIC"/>
    <property type="match status" value="1"/>
</dbReference>
<dbReference type="PANTHER" id="PTHR10543">
    <property type="entry name" value="BETA-CAROTENE DIOXYGENASE"/>
    <property type="match status" value="1"/>
</dbReference>
<dbReference type="Pfam" id="PF03055">
    <property type="entry name" value="RPE65"/>
    <property type="match status" value="1"/>
</dbReference>
<evidence type="ECO:0000250" key="1">
    <source>
        <dbReference type="UniProtKB" id="O24592"/>
    </source>
</evidence>
<evidence type="ECO:0000255" key="2"/>
<evidence type="ECO:0000256" key="3">
    <source>
        <dbReference type="SAM" id="MobiDB-lite"/>
    </source>
</evidence>
<evidence type="ECO:0000269" key="4">
    <source>
    </source>
</evidence>
<evidence type="ECO:0000269" key="5">
    <source>
    </source>
</evidence>
<evidence type="ECO:0000269" key="6">
    <source>
    </source>
</evidence>
<evidence type="ECO:0000269" key="7">
    <source>
    </source>
</evidence>
<evidence type="ECO:0000305" key="8"/>
<evidence type="ECO:0000312" key="9">
    <source>
        <dbReference type="EMBL" id="AAW21321.1"/>
    </source>
</evidence>
<evidence type="ECO:0000312" key="10">
    <source>
        <dbReference type="EMBL" id="ABA99870.1"/>
    </source>
</evidence>
<evidence type="ECO:0000312" key="11">
    <source>
        <dbReference type="EMBL" id="BAH95791.1"/>
    </source>
</evidence>
<organism>
    <name type="scientific">Oryza sativa subsp. japonica</name>
    <name type="common">Rice</name>
    <dbReference type="NCBI Taxonomy" id="39947"/>
    <lineage>
        <taxon>Eukaryota</taxon>
        <taxon>Viridiplantae</taxon>
        <taxon>Streptophyta</taxon>
        <taxon>Embryophyta</taxon>
        <taxon>Tracheophyta</taxon>
        <taxon>Spermatophyta</taxon>
        <taxon>Magnoliopsida</taxon>
        <taxon>Liliopsida</taxon>
        <taxon>Poales</taxon>
        <taxon>Poaceae</taxon>
        <taxon>BOP clade</taxon>
        <taxon>Oryzoideae</taxon>
        <taxon>Oryzeae</taxon>
        <taxon>Oryzinae</taxon>
        <taxon>Oryza</taxon>
        <taxon>Oryza sativa</taxon>
    </lineage>
</organism>
<keyword id="KW-0937">Abscisic acid biosynthesis</keyword>
<keyword id="KW-0150">Chloroplast</keyword>
<keyword id="KW-0223">Dioxygenase</keyword>
<keyword id="KW-0408">Iron</keyword>
<keyword id="KW-0479">Metal-binding</keyword>
<keyword id="KW-0560">Oxidoreductase</keyword>
<keyword id="KW-0934">Plastid</keyword>
<keyword id="KW-1185">Reference proteome</keyword>
<keyword id="KW-0346">Stress response</keyword>
<keyword id="KW-0809">Transit peptide</keyword>
<reference key="1">
    <citation type="submission" date="2004-11" db="EMBL/GenBank/DDBJ databases">
        <title>Oryza sativa japonica group 9-cis-epoxycarotenoid dioxygenase 5 (NCED5) mRNA.</title>
        <authorList>
            <person name="Dian W.M."/>
        </authorList>
    </citation>
    <scope>NUCLEOTIDE SEQUENCE</scope>
</reference>
<reference key="2">
    <citation type="journal article" date="2005" name="BMC Biol.">
        <title>The sequence of rice chromosomes 11 and 12, rich in disease resistance genes and recent gene duplications.</title>
        <authorList>
            <consortium name="The rice chromosomes 11 and 12 sequencing consortia"/>
        </authorList>
    </citation>
    <scope>NUCLEOTIDE SEQUENCE [LARGE SCALE GENOMIC DNA]</scope>
    <source>
        <strain>cv. Nipponbare</strain>
    </source>
</reference>
<reference key="3">
    <citation type="journal article" date="2005" name="Nature">
        <title>The map-based sequence of the rice genome.</title>
        <authorList>
            <consortium name="International rice genome sequencing project (IRGSP)"/>
        </authorList>
    </citation>
    <scope>NUCLEOTIDE SEQUENCE [LARGE SCALE GENOMIC DNA]</scope>
    <source>
        <strain>cv. Nipponbare</strain>
    </source>
</reference>
<reference key="4">
    <citation type="journal article" date="2008" name="Nucleic Acids Res.">
        <title>The rice annotation project database (RAP-DB): 2008 update.</title>
        <authorList>
            <consortium name="The rice annotation project (RAP)"/>
        </authorList>
    </citation>
    <scope>GENOME REANNOTATION</scope>
    <source>
        <strain>cv. Nipponbare</strain>
    </source>
</reference>
<reference key="5">
    <citation type="journal article" date="2013" name="Rice">
        <title>Improvement of the Oryza sativa Nipponbare reference genome using next generation sequence and optical map data.</title>
        <authorList>
            <person name="Kawahara Y."/>
            <person name="de la Bastide M."/>
            <person name="Hamilton J.P."/>
            <person name="Kanamori H."/>
            <person name="McCombie W.R."/>
            <person name="Ouyang S."/>
            <person name="Schwartz D.C."/>
            <person name="Tanaka T."/>
            <person name="Wu J."/>
            <person name="Zhou S."/>
            <person name="Childs K.L."/>
            <person name="Davidson R.M."/>
            <person name="Lin H."/>
            <person name="Quesada-Ocampo L."/>
            <person name="Vaillancourt B."/>
            <person name="Sakai H."/>
            <person name="Lee S.S."/>
            <person name="Kim J."/>
            <person name="Numa H."/>
            <person name="Itoh T."/>
            <person name="Buell C.R."/>
            <person name="Matsumoto T."/>
        </authorList>
    </citation>
    <scope>GENOME REANNOTATION</scope>
    <source>
        <strain>cv. Nipponbare</strain>
    </source>
</reference>
<reference key="6">
    <citation type="journal article" date="2008" name="Plant Physiol.">
        <title>A third phytoene synthase is devoted to abiotic stress-induced abscisic acid formation in rice and defines functional diversification of phytoene synthase genes.</title>
        <authorList>
            <person name="Welsch R."/>
            <person name="Wuest F."/>
            <person name="Baer C."/>
            <person name="Al-Babili S."/>
            <person name="Beyer P."/>
        </authorList>
    </citation>
    <scope>INDUCTION</scope>
</reference>
<reference key="7">
    <citation type="journal article" date="2013" name="Planta">
        <title>Phosphorylation of D-allose by hexokinase involved in regulation of OsABF1 expression for growth inhibition in Oryza sativa L.</title>
        <authorList>
            <person name="Fukumoto T."/>
            <person name="Kano A."/>
            <person name="Ohtani K."/>
            <person name="Inoue M."/>
            <person name="Yoshihara A."/>
            <person name="Izumori K."/>
            <person name="Tajima S."/>
            <person name="Shigematsu Y."/>
            <person name="Tanaka K."/>
            <person name="Ohkouchi T."/>
            <person name="Ishida Y."/>
            <person name="Nishizawa Y."/>
            <person name="Tada Y."/>
            <person name="Ichimura K."/>
            <person name="Gomi K."/>
            <person name="Yoo S.D."/>
            <person name="Sheen J."/>
            <person name="Akimitsu K."/>
        </authorList>
    </citation>
    <scope>INDUCTION BY D-ALLOSE</scope>
</reference>
<reference key="8">
    <citation type="journal article" date="2015" name="J. Integr. Plant Biol.">
        <title>GID1 modulates stomatal response and submergence tolerance involving abscisic acid and gibberellic acid signaling in rice.</title>
        <authorList>
            <person name="Du H."/>
            <person name="Chang Y."/>
            <person name="Huang F."/>
            <person name="Xiong L."/>
        </authorList>
    </citation>
    <scope>INDUCTION BY DROUGHT STRESS</scope>
</reference>
<reference key="9">
    <citation type="journal article" date="2015" name="Plant Cell Physiol.">
        <title>Reduced ABA accumulation in the root system is caused by ABA exudation in upland rice (Oryza sativa L. var. Gaoshan1) and this enhanced drought adaptation.</title>
        <authorList>
            <person name="Shi L."/>
            <person name="Guo M."/>
            <person name="Ye N."/>
            <person name="Liu Y."/>
            <person name="Liu R."/>
            <person name="Xia Y."/>
            <person name="Cui S."/>
            <person name="Zhang J."/>
        </authorList>
    </citation>
    <scope>INDUCTION BY DROUGHT STRESS</scope>
</reference>